<comment type="function">
    <text>Confers resistance to late blight (Phytophthora infestans) races carrying the avirulence gene Avr1. Resistance proteins guard the plant against pathogens that contain an appropriate avirulence protein via an indirect interaction with this avirulence protein. That triggers a defense system including the hypersensitive response, which restricts the pathogen growth.</text>
</comment>
<comment type="subcellular location">
    <subcellularLocation>
        <location evidence="1">Cytoplasm</location>
    </subcellularLocation>
    <subcellularLocation>
        <location evidence="1">Membrane</location>
        <topology evidence="1">Peripheral membrane protein</topology>
    </subcellularLocation>
</comment>
<comment type="miscellaneous">
    <text>This protein is encoded by the haplotype C genome of the allohexaploid Solanum demissum.</text>
</comment>
<comment type="similarity">
    <text evidence="4">Belongs to the disease resistance NB-LRR family.</text>
</comment>
<evidence type="ECO:0000250" key="1"/>
<evidence type="ECO:0000255" key="2"/>
<evidence type="ECO:0000255" key="3">
    <source>
        <dbReference type="PROSITE-ProRule" id="PRU00280"/>
    </source>
</evidence>
<evidence type="ECO:0000305" key="4"/>
<protein>
    <recommendedName>
        <fullName>Putative late blight resistance protein homolog R1C-3</fullName>
    </recommendedName>
</protein>
<sequence length="1292" mass="149778">MYFNNELSNLKDHLLVTLQNNSDVERDRINFILWDLKFLDCFLHLKRLPFASECGMLEFSQKMIEIWKIQSHREPYDCPYWKEVIWKTKQEFRAEYSFPNTSLAANKVDDVSPKFVMEVIDVFVENLNVVVKINDPYSWLFVPEHKEQIEQVLKELKLLRFFVCFVSNKCIEPQYRHTTFYIHALIEASHIAMVVWLHLPVLNGIVNQYLAPSEVSRLRSDFMEMKIKSIQPDISRNNIYIDVLQALKSTIPQAQNKHAVESGIVETPTQNLTVGLSDQMVNLQEMLCFLRDNLIHLPILDLEFHLQDMDSVIVDAGLLIYSLYDIKGEKEDTVLDNMNRALGFDLPRNIEPIKAMVYLVMQKAFQSNLPRVHGLGYVDFLLKNLKDFQGRYSDSLAFLKNQLQVIQTKFESMQPFLKVVVEEPHNKLKTLNEDYATQIIRKAYEVEYVVDACINKEVPQWCIERWLLDIIEEITCIKAKIQEKNTVEDTMKSVIASSQLARTPRMNEEIVGFEDVIETLRKKLLNGTKGQDVISMHGMPGLGKTTLANRLYSDRSVVSQFDICAQCCVSQVYSYKDLLLALLRDAIGEGSVRTELHANELADMLRKTLLPRRYLILVDDVWENSVWDDLSGCFPDVNNRSRIILTTRHHEVAKYASVHSDPLHLRMFDEVESWKLLEKKVFGEESCSPLLRDIGQRIAKMCGQLPLSIVLVAGILSEMEKEVEYWEQVANNLGTHIHNDSRAVVDQSYHVLPCHLKSCFLYFGAFLEDRVIDISRLIRLWISESFVKSCEGRSLEDIAEGYLENLIGRNLVMVTQRDDSDGKVKACRLHDVLLDFCKERAAEENFLLWINRDQITKPSSCVYSHNQHAHLAFTDMKNLVEWSASCSRVGSVLFKNYDPYFAGRPLSSHAFSISRILLNFKFLKVLDLEHQVVIDSIPTELFYLRYISAHIEQNSIPSSISNLWNLETLILNRTSAATGKTLLLPSTVWDMVKLRHLHIPKFSPENKKALLKKSARLDDLETLFNPYFTRVEDAELMLRKTPNLRKLICEVQCLEYPHQYHVLNFPIRLEMLKLHQSNIFNPISFCISAPNLKYLELSGFYLDSQYLSETADHLKHLEVLKLYYVEFGDHREWKVSNGMFPQLKILKLKCVSLLKWIVADDAFPNLEQLVLRGCRHLMEIPSCFMDILSLQYIEVENCNESVVKSAMNIQETQVEDNQNTNFKLILIEIHLFYLFDMKGIESISTDMKEKKLTVTRDVDADEVQLVVEKLRNVAYADEVQLVVEKLRKRGML</sequence>
<name>R1C3_SOLDE</name>
<accession>Q6L3N7</accession>
<dbReference type="EMBL" id="AC149291">
    <property type="protein sequence ID" value="AAT38759.1"/>
    <property type="molecule type" value="Genomic_DNA"/>
</dbReference>
<dbReference type="SMR" id="Q6L3N7"/>
<dbReference type="GO" id="GO:0005737">
    <property type="term" value="C:cytoplasm"/>
    <property type="evidence" value="ECO:0007669"/>
    <property type="project" value="UniProtKB-SubCell"/>
</dbReference>
<dbReference type="GO" id="GO:0016020">
    <property type="term" value="C:membrane"/>
    <property type="evidence" value="ECO:0007669"/>
    <property type="project" value="UniProtKB-SubCell"/>
</dbReference>
<dbReference type="GO" id="GO:0043531">
    <property type="term" value="F:ADP binding"/>
    <property type="evidence" value="ECO:0007669"/>
    <property type="project" value="InterPro"/>
</dbReference>
<dbReference type="GO" id="GO:0005524">
    <property type="term" value="F:ATP binding"/>
    <property type="evidence" value="ECO:0007669"/>
    <property type="project" value="UniProtKB-KW"/>
</dbReference>
<dbReference type="GO" id="GO:0046872">
    <property type="term" value="F:metal ion binding"/>
    <property type="evidence" value="ECO:0007669"/>
    <property type="project" value="InterPro"/>
</dbReference>
<dbReference type="GO" id="GO:0009626">
    <property type="term" value="P:plant-type hypersensitive response"/>
    <property type="evidence" value="ECO:0007669"/>
    <property type="project" value="UniProtKB-KW"/>
</dbReference>
<dbReference type="CDD" id="cd14798">
    <property type="entry name" value="RX-CC_like"/>
    <property type="match status" value="1"/>
</dbReference>
<dbReference type="FunFam" id="3.40.50.300:FF:001091">
    <property type="entry name" value="Probable disease resistance protein At1g61300"/>
    <property type="match status" value="1"/>
</dbReference>
<dbReference type="FunFam" id="1.10.10.10:FF:000322">
    <property type="entry name" value="Probable disease resistance protein At1g63360"/>
    <property type="match status" value="1"/>
</dbReference>
<dbReference type="Gene3D" id="1.10.8.430">
    <property type="entry name" value="Helical domain of apoptotic protease-activating factors"/>
    <property type="match status" value="1"/>
</dbReference>
<dbReference type="Gene3D" id="3.40.50.300">
    <property type="entry name" value="P-loop containing nucleotide triphosphate hydrolases"/>
    <property type="match status" value="1"/>
</dbReference>
<dbReference type="Gene3D" id="3.80.10.10">
    <property type="entry name" value="Ribonuclease Inhibitor"/>
    <property type="match status" value="1"/>
</dbReference>
<dbReference type="Gene3D" id="1.10.10.10">
    <property type="entry name" value="Winged helix-like DNA-binding domain superfamily/Winged helix DNA-binding domain"/>
    <property type="match status" value="1"/>
</dbReference>
<dbReference type="InterPro" id="IPR042197">
    <property type="entry name" value="Apaf_helical"/>
</dbReference>
<dbReference type="InterPro" id="IPR044974">
    <property type="entry name" value="Disease_R_plants"/>
</dbReference>
<dbReference type="InterPro" id="IPR006121">
    <property type="entry name" value="HMA_dom"/>
</dbReference>
<dbReference type="InterPro" id="IPR032675">
    <property type="entry name" value="LRR_dom_sf"/>
</dbReference>
<dbReference type="InterPro" id="IPR002182">
    <property type="entry name" value="NB-ARC"/>
</dbReference>
<dbReference type="InterPro" id="IPR027417">
    <property type="entry name" value="P-loop_NTPase"/>
</dbReference>
<dbReference type="InterPro" id="IPR021929">
    <property type="entry name" value="R1A-like_N"/>
</dbReference>
<dbReference type="InterPro" id="IPR038005">
    <property type="entry name" value="RX-like_CC"/>
</dbReference>
<dbReference type="InterPro" id="IPR036388">
    <property type="entry name" value="WH-like_DNA-bd_sf"/>
</dbReference>
<dbReference type="PANTHER" id="PTHR23155:SF1152">
    <property type="entry name" value="AAA+ ATPASE DOMAIN-CONTAINING PROTEIN"/>
    <property type="match status" value="1"/>
</dbReference>
<dbReference type="PANTHER" id="PTHR23155">
    <property type="entry name" value="DISEASE RESISTANCE PROTEIN RP"/>
    <property type="match status" value="1"/>
</dbReference>
<dbReference type="Pfam" id="PF00931">
    <property type="entry name" value="NB-ARC"/>
    <property type="match status" value="1"/>
</dbReference>
<dbReference type="Pfam" id="PF12061">
    <property type="entry name" value="NB-LRR"/>
    <property type="match status" value="1"/>
</dbReference>
<dbReference type="Pfam" id="PF23559">
    <property type="entry name" value="WH_DRP"/>
    <property type="match status" value="1"/>
</dbReference>
<dbReference type="PRINTS" id="PR00364">
    <property type="entry name" value="DISEASERSIST"/>
</dbReference>
<dbReference type="SUPFAM" id="SSF52058">
    <property type="entry name" value="L domain-like"/>
    <property type="match status" value="1"/>
</dbReference>
<dbReference type="SUPFAM" id="SSF52540">
    <property type="entry name" value="P-loop containing nucleoside triphosphate hydrolases"/>
    <property type="match status" value="1"/>
</dbReference>
<dbReference type="PROSITE" id="PS50846">
    <property type="entry name" value="HMA_2"/>
    <property type="match status" value="1"/>
</dbReference>
<gene>
    <name type="primary">R1C-3</name>
    <name type="ORF">PGEC568H16.16</name>
</gene>
<organism>
    <name type="scientific">Solanum demissum</name>
    <name type="common">Wild potato</name>
    <dbReference type="NCBI Taxonomy" id="50514"/>
    <lineage>
        <taxon>Eukaryota</taxon>
        <taxon>Viridiplantae</taxon>
        <taxon>Streptophyta</taxon>
        <taxon>Embryophyta</taxon>
        <taxon>Tracheophyta</taxon>
        <taxon>Spermatophyta</taxon>
        <taxon>Magnoliopsida</taxon>
        <taxon>eudicotyledons</taxon>
        <taxon>Gunneridae</taxon>
        <taxon>Pentapetalae</taxon>
        <taxon>asterids</taxon>
        <taxon>lamiids</taxon>
        <taxon>Solanales</taxon>
        <taxon>Solanaceae</taxon>
        <taxon>Solanoideae</taxon>
        <taxon>Solaneae</taxon>
        <taxon>Solanum</taxon>
    </lineage>
</organism>
<reference key="1">
    <citation type="journal article" date="2005" name="Plant J.">
        <title>The R1 resistance gene cluster contains three groups of independently evolving, type I R1 homologues and shows substantial structural variation among haplotypes of Solanum demissum.</title>
        <authorList>
            <person name="Kuang H."/>
            <person name="Wei F."/>
            <person name="Marano M.R."/>
            <person name="Wirtz U."/>
            <person name="Wang X."/>
            <person name="Liu J."/>
            <person name="Shum W.P."/>
            <person name="Zaborsky J."/>
            <person name="Tallon L.J."/>
            <person name="Rensink W."/>
            <person name="Lobst S."/>
            <person name="Zhang P."/>
            <person name="Tornqvist C.-E."/>
            <person name="Tek A."/>
            <person name="Bamberg J."/>
            <person name="Helgeson J."/>
            <person name="Fry W."/>
            <person name="You F."/>
            <person name="Luo M.-C."/>
            <person name="Jiang J."/>
            <person name="Buell C.R."/>
            <person name="Baker B."/>
        </authorList>
    </citation>
    <scope>NUCLEOTIDE SEQUENCE [GENOMIC DNA]</scope>
</reference>
<feature type="chain" id="PRO_0000233973" description="Putative late blight resistance protein homolog R1C-3">
    <location>
        <begin position="1"/>
        <end position="1292"/>
    </location>
</feature>
<feature type="domain" description="NB-ARC">
    <location>
        <begin position="505"/>
        <end position="792"/>
    </location>
</feature>
<feature type="repeat" description="LRR 1">
    <location>
        <begin position="842"/>
        <end position="865"/>
    </location>
</feature>
<feature type="repeat" description="LRR 2">
    <location>
        <begin position="920"/>
        <end position="944"/>
    </location>
</feature>
<feature type="repeat" description="LRR 3">
    <location>
        <begin position="963"/>
        <end position="991"/>
    </location>
</feature>
<feature type="repeat" description="LRR 4">
    <location>
        <begin position="1066"/>
        <end position="1089"/>
    </location>
</feature>
<feature type="repeat" description="LRR 5">
    <location>
        <begin position="1094"/>
        <end position="1113"/>
    </location>
</feature>
<feature type="repeat" description="LRR 6">
    <location>
        <begin position="1114"/>
        <end position="1142"/>
    </location>
</feature>
<feature type="repeat" description="LRR 7">
    <location>
        <begin position="1163"/>
        <end position="1187"/>
    </location>
</feature>
<feature type="domain" description="HMA" evidence="3">
    <location>
        <begin position="1211"/>
        <end position="1278"/>
    </location>
</feature>
<feature type="coiled-coil region" evidence="2">
    <location>
        <begin position="394"/>
        <end position="414"/>
    </location>
</feature>
<feature type="coiled-coil region" evidence="2">
    <location>
        <begin position="505"/>
        <end position="526"/>
    </location>
</feature>
<feature type="binding site" evidence="2">
    <location>
        <begin position="538"/>
        <end position="545"/>
    </location>
    <ligand>
        <name>ATP</name>
        <dbReference type="ChEBI" id="CHEBI:30616"/>
    </ligand>
</feature>
<keyword id="KW-0067">ATP-binding</keyword>
<keyword id="KW-0175">Coiled coil</keyword>
<keyword id="KW-0963">Cytoplasm</keyword>
<keyword id="KW-0381">Hypersensitive response</keyword>
<keyword id="KW-0433">Leucine-rich repeat</keyword>
<keyword id="KW-0472">Membrane</keyword>
<keyword id="KW-0547">Nucleotide-binding</keyword>
<keyword id="KW-0611">Plant defense</keyword>
<keyword id="KW-0677">Repeat</keyword>
<proteinExistence type="inferred from homology"/>